<reference evidence="5" key="1">
    <citation type="journal article" date="2009" name="Antimicrob. Agents Chemother.">
        <title>Activity of the novel peptide arminin against multiresistant human pathogens shows the considerable potential of phylogenetically ancient organisms as drug sources.</title>
        <authorList>
            <person name="Augustin R."/>
            <person name="Anton-Erxleben F."/>
            <person name="Jungnickel S."/>
            <person name="Hemmrich G."/>
            <person name="Spudy B."/>
            <person name="Podschun R."/>
            <person name="Bosch T.C."/>
        </authorList>
    </citation>
    <scope>NUCLEOTIDE SEQUENCE [MRNA]</scope>
    <source>
        <strain>AEP</strain>
    </source>
</reference>
<feature type="signal peptide" evidence="2">
    <location>
        <begin position="1"/>
        <end position="18"/>
    </location>
</feature>
<feature type="propeptide" id="PRO_0000461966" evidence="1">
    <location>
        <begin position="19"/>
        <end position="57"/>
    </location>
</feature>
<feature type="peptide" id="PRO_5003039713" description="Arminin 1b" evidence="1">
    <location>
        <begin position="58"/>
        <end position="85"/>
    </location>
</feature>
<feature type="modified residue" description="Valine amide" evidence="1">
    <location>
        <position position="85"/>
    </location>
</feature>
<accession>D2XUU5</accession>
<protein>
    <recommendedName>
        <fullName evidence="3">Arminin 1b</fullName>
    </recommendedName>
</protein>
<evidence type="ECO:0000250" key="1">
    <source>
        <dbReference type="UniProtKB" id="D2XUU4"/>
    </source>
</evidence>
<evidence type="ECO:0000255" key="2"/>
<evidence type="ECO:0000303" key="3">
    <source>
    </source>
</evidence>
<evidence type="ECO:0000305" key="4"/>
<evidence type="ECO:0000312" key="5">
    <source>
        <dbReference type="EMBL" id="ADB56978.1"/>
    </source>
</evidence>
<name>ARM1B_HYDVU</name>
<keyword id="KW-0027">Amidation</keyword>
<keyword id="KW-0044">Antibiotic</keyword>
<keyword id="KW-0929">Antimicrobial</keyword>
<keyword id="KW-0391">Immunity</keyword>
<keyword id="KW-0399">Innate immunity</keyword>
<keyword id="KW-0472">Membrane</keyword>
<keyword id="KW-1185">Reference proteome</keyword>
<keyword id="KW-0964">Secreted</keyword>
<keyword id="KW-0732">Signal</keyword>
<keyword id="KW-1052">Target cell membrane</keyword>
<keyword id="KW-1053">Target membrane</keyword>
<sequence>MKTVLAFLFLTFIAFTHAESYEDVKEEIKNEVEREIFEDLEEESDVLESNVRELNDAKPWRFRRAIRRVRWRKVAPYIPFVVRTVGKK</sequence>
<dbReference type="EMBL" id="GU256275">
    <property type="protein sequence ID" value="ADB56978.1"/>
    <property type="molecule type" value="mRNA"/>
</dbReference>
<dbReference type="Proteomes" id="UP000694840">
    <property type="component" value="Unplaced"/>
</dbReference>
<dbReference type="GO" id="GO:0005576">
    <property type="term" value="C:extracellular region"/>
    <property type="evidence" value="ECO:0007669"/>
    <property type="project" value="UniProtKB-SubCell"/>
</dbReference>
<organism>
    <name type="scientific">Hydra vulgaris</name>
    <name type="common">Hydra</name>
    <name type="synonym">Hydra attenuata</name>
    <dbReference type="NCBI Taxonomy" id="6087"/>
    <lineage>
        <taxon>Eukaryota</taxon>
        <taxon>Metazoa</taxon>
        <taxon>Cnidaria</taxon>
        <taxon>Hydrozoa</taxon>
        <taxon>Hydroidolina</taxon>
        <taxon>Anthoathecata</taxon>
        <taxon>Aplanulata</taxon>
        <taxon>Hydridae</taxon>
        <taxon>Hydra</taxon>
    </lineage>
</organism>
<comment type="function">
    <text evidence="1">Antimicrobial peptide with a broad-spectrum antimicrobial activity. Keeps its antibacterial activity under a wide range of salt concentrations that mimic physiological conditions of human blood, which is surprising, since Hydra is an obligate freshwater animal with nearly no salt tolerance. Does not affect red blood cells.</text>
</comment>
<comment type="subcellular location">
    <subcellularLocation>
        <location evidence="1">Secreted</location>
    </subcellularLocation>
    <subcellularLocation>
        <location evidence="1">Target cell membrane</location>
    </subcellularLocation>
</comment>
<comment type="tissue specificity">
    <text evidence="1">Expressed in entodermal epithelium along the body column.</text>
</comment>
<comment type="similarity">
    <text evidence="4">Belongs to the arminin family.</text>
</comment>
<proteinExistence type="inferred from homology"/>